<organism>
    <name type="scientific">Dictyostelium discoideum</name>
    <name type="common">Social amoeba</name>
    <dbReference type="NCBI Taxonomy" id="44689"/>
    <lineage>
        <taxon>Eukaryota</taxon>
        <taxon>Amoebozoa</taxon>
        <taxon>Evosea</taxon>
        <taxon>Eumycetozoa</taxon>
        <taxon>Dictyostelia</taxon>
        <taxon>Dictyosteliales</taxon>
        <taxon>Dictyosteliaceae</taxon>
        <taxon>Dictyostelium</taxon>
    </lineage>
</organism>
<gene>
    <name type="primary">hatA</name>
    <name type="synonym">abpH</name>
    <name type="ORF">DDB_G0282141</name>
</gene>
<evidence type="ECO:0000269" key="1">
    <source>
    </source>
</evidence>
<evidence type="ECO:0000305" key="2"/>
<evidence type="ECO:0007829" key="3">
    <source>
        <dbReference type="PDB" id="1HCD"/>
    </source>
</evidence>
<evidence type="ECO:0007829" key="4">
    <source>
        <dbReference type="PDB" id="1HCE"/>
    </source>
</evidence>
<keyword id="KW-0002">3D-structure</keyword>
<keyword id="KW-0009">Actin-binding</keyword>
<keyword id="KW-1003">Cell membrane</keyword>
<keyword id="KW-0963">Cytoplasm</keyword>
<keyword id="KW-0903">Direct protein sequencing</keyword>
<keyword id="KW-1015">Disulfide bond</keyword>
<keyword id="KW-0449">Lipoprotein</keyword>
<keyword id="KW-0472">Membrane</keyword>
<keyword id="KW-0519">Myristate</keyword>
<keyword id="KW-0597">Phosphoprotein</keyword>
<keyword id="KW-1185">Reference proteome</keyword>
<keyword id="KW-0677">Repeat</keyword>
<protein>
    <recommendedName>
        <fullName>Hisactophilin-1</fullName>
    </recommendedName>
    <alternativeName>
        <fullName>Histidine-rich actin-binding protein 1</fullName>
        <shortName>HS I</shortName>
    </alternativeName>
</protein>
<feature type="initiator methionine" description="Removed">
    <location>
        <position position="1"/>
    </location>
</feature>
<feature type="chain" id="PRO_0000083904" description="Hisactophilin-1">
    <location>
        <begin position="2"/>
        <end position="118"/>
    </location>
</feature>
<feature type="repeat" description="1">
    <location>
        <begin position="34"/>
        <end position="46"/>
    </location>
</feature>
<feature type="repeat" description="2">
    <location>
        <begin position="74"/>
        <end position="86"/>
    </location>
</feature>
<feature type="region of interest" description="Contains several HHXH repeats">
    <location>
        <begin position="8"/>
        <end position="109"/>
    </location>
</feature>
<feature type="region of interest" description="2 X 13 AA approximate repeats">
    <location>
        <begin position="34"/>
        <end position="86"/>
    </location>
</feature>
<feature type="lipid moiety-binding region" description="N-myristoyl glycine" evidence="1">
    <location>
        <position position="2"/>
    </location>
</feature>
<feature type="strand" evidence="3">
    <location>
        <begin position="4"/>
        <end position="9"/>
    </location>
</feature>
<feature type="strand" evidence="3">
    <location>
        <begin position="13"/>
        <end position="17"/>
    </location>
</feature>
<feature type="strand" evidence="3">
    <location>
        <begin position="20"/>
        <end position="24"/>
    </location>
</feature>
<feature type="strand" evidence="3">
    <location>
        <begin position="35"/>
        <end position="39"/>
    </location>
</feature>
<feature type="strand" evidence="3">
    <location>
        <begin position="42"/>
        <end position="50"/>
    </location>
</feature>
<feature type="strand" evidence="3">
    <location>
        <begin position="52"/>
        <end position="57"/>
    </location>
</feature>
<feature type="strand" evidence="3">
    <location>
        <begin position="60"/>
        <end position="64"/>
    </location>
</feature>
<feature type="strand" evidence="3">
    <location>
        <begin position="68"/>
        <end position="79"/>
    </location>
</feature>
<feature type="strand" evidence="3">
    <location>
        <begin position="82"/>
        <end position="86"/>
    </location>
</feature>
<feature type="helix" evidence="4">
    <location>
        <begin position="88"/>
        <end position="90"/>
    </location>
</feature>
<feature type="strand" evidence="3">
    <location>
        <begin position="92"/>
        <end position="95"/>
    </location>
</feature>
<feature type="helix" evidence="3">
    <location>
        <begin position="97"/>
        <end position="99"/>
    </location>
</feature>
<feature type="strand" evidence="3">
    <location>
        <begin position="101"/>
        <end position="106"/>
    </location>
</feature>
<feature type="strand" evidence="3">
    <location>
        <begin position="113"/>
        <end position="116"/>
    </location>
</feature>
<reference key="1">
    <citation type="journal article" date="1989" name="J. Biol. Chem.">
        <title>Hisactophilin, a histidine-rich actin-binding protein from Dictyostelium discoideum.</title>
        <authorList>
            <person name="Scheel J."/>
            <person name="Ziegelbauer K."/>
            <person name="Kupke T."/>
            <person name="Humbel B.M."/>
            <person name="Noegel A.A."/>
            <person name="Gerisch G."/>
            <person name="Schleicher M."/>
        </authorList>
    </citation>
    <scope>NUCLEOTIDE SEQUENCE [MRNA]</scope>
</reference>
<reference key="2">
    <citation type="journal article" date="2005" name="Nature">
        <title>The genome of the social amoeba Dictyostelium discoideum.</title>
        <authorList>
            <person name="Eichinger L."/>
            <person name="Pachebat J.A."/>
            <person name="Gloeckner G."/>
            <person name="Rajandream M.A."/>
            <person name="Sucgang R."/>
            <person name="Berriman M."/>
            <person name="Song J."/>
            <person name="Olsen R."/>
            <person name="Szafranski K."/>
            <person name="Xu Q."/>
            <person name="Tunggal B."/>
            <person name="Kummerfeld S."/>
            <person name="Madera M."/>
            <person name="Konfortov B.A."/>
            <person name="Rivero F."/>
            <person name="Bankier A.T."/>
            <person name="Lehmann R."/>
            <person name="Hamlin N."/>
            <person name="Davies R."/>
            <person name="Gaudet P."/>
            <person name="Fey P."/>
            <person name="Pilcher K."/>
            <person name="Chen G."/>
            <person name="Saunders D."/>
            <person name="Sodergren E.J."/>
            <person name="Davis P."/>
            <person name="Kerhornou A."/>
            <person name="Nie X."/>
            <person name="Hall N."/>
            <person name="Anjard C."/>
            <person name="Hemphill L."/>
            <person name="Bason N."/>
            <person name="Farbrother P."/>
            <person name="Desany B."/>
            <person name="Just E."/>
            <person name="Morio T."/>
            <person name="Rost R."/>
            <person name="Churcher C.M."/>
            <person name="Cooper J."/>
            <person name="Haydock S."/>
            <person name="van Driessche N."/>
            <person name="Cronin A."/>
            <person name="Goodhead I."/>
            <person name="Muzny D.M."/>
            <person name="Mourier T."/>
            <person name="Pain A."/>
            <person name="Lu M."/>
            <person name="Harper D."/>
            <person name="Lindsay R."/>
            <person name="Hauser H."/>
            <person name="James K.D."/>
            <person name="Quiles M."/>
            <person name="Madan Babu M."/>
            <person name="Saito T."/>
            <person name="Buchrieser C."/>
            <person name="Wardroper A."/>
            <person name="Felder M."/>
            <person name="Thangavelu M."/>
            <person name="Johnson D."/>
            <person name="Knights A."/>
            <person name="Loulseged H."/>
            <person name="Mungall K.L."/>
            <person name="Oliver K."/>
            <person name="Price C."/>
            <person name="Quail M.A."/>
            <person name="Urushihara H."/>
            <person name="Hernandez J."/>
            <person name="Rabbinowitsch E."/>
            <person name="Steffen D."/>
            <person name="Sanders M."/>
            <person name="Ma J."/>
            <person name="Kohara Y."/>
            <person name="Sharp S."/>
            <person name="Simmonds M.N."/>
            <person name="Spiegler S."/>
            <person name="Tivey A."/>
            <person name="Sugano S."/>
            <person name="White B."/>
            <person name="Walker D."/>
            <person name="Woodward J.R."/>
            <person name="Winckler T."/>
            <person name="Tanaka Y."/>
            <person name="Shaulsky G."/>
            <person name="Schleicher M."/>
            <person name="Weinstock G.M."/>
            <person name="Rosenthal A."/>
            <person name="Cox E.C."/>
            <person name="Chisholm R.L."/>
            <person name="Gibbs R.A."/>
            <person name="Loomis W.F."/>
            <person name="Platzer M."/>
            <person name="Kay R.R."/>
            <person name="Williams J.G."/>
            <person name="Dear P.H."/>
            <person name="Noegel A.A."/>
            <person name="Barrell B.G."/>
            <person name="Kuspa A."/>
        </authorList>
    </citation>
    <scope>NUCLEOTIDE SEQUENCE [LARGE SCALE GENOMIC DNA]</scope>
    <source>
        <strain>AX4</strain>
    </source>
</reference>
<reference key="3">
    <citation type="journal article" date="1995" name="J. Biol. Chem.">
        <title>The pH-sensitive actin-binding protein hisactophilin of Dictyostelium exists in two isoforms which both are myristoylated and distributed between plasma membrane and cytoplasm.</title>
        <authorList>
            <person name="Hanakam F."/>
            <person name="Eckerskorn C."/>
            <person name="Lottspeich F."/>
            <person name="Mueller-Taubenberger A."/>
            <person name="Schaefer W."/>
            <person name="Gerisch G."/>
        </authorList>
    </citation>
    <scope>PARTIAL PROTEIN SEQUENCE</scope>
    <scope>PHOSPHORYLATION</scope>
    <scope>MYRISTOYLATION AT GLY-2</scope>
    <source>
        <strain>AX2</strain>
        <strain>AX3</strain>
    </source>
</reference>
<reference key="4">
    <citation type="journal article" date="2006" name="Mol. Cell. Proteomics">
        <title>Proteomics fingerprinting of phagosome maturation and evidence for the role of a Galpha during uptake.</title>
        <authorList>
            <person name="Gotthardt D."/>
            <person name="Blancheteau V."/>
            <person name="Bosserhoff A."/>
            <person name="Ruppert T."/>
            <person name="Delorenzi M."/>
            <person name="Soldati T."/>
        </authorList>
    </citation>
    <scope>IDENTIFICATION BY MASS SPECTROMETRY [LARGE SCALE ANALYSIS]</scope>
    <source>
        <strain>AX2</strain>
    </source>
</reference>
<reference key="5">
    <citation type="journal article" date="1992" name="Nature">
        <title>Structure of hisactophilin is similar to interleukin-1 beta and fibroblast growth factor.</title>
        <authorList>
            <person name="Habazetti J."/>
            <person name="Gondol D."/>
            <person name="Wiltschek R."/>
            <person name="Otlewski J."/>
            <person name="Schleicher M."/>
            <person name="Holak T.A."/>
        </authorList>
    </citation>
    <scope>STRUCTURE BY NMR</scope>
</reference>
<accession>P13231</accession>
<accession>Q54SW7</accession>
<name>HATA_DICDI</name>
<dbReference type="EMBL" id="J04472">
    <property type="protein sequence ID" value="AAA33218.1"/>
    <property type="molecule type" value="mRNA"/>
</dbReference>
<dbReference type="EMBL" id="AAFI02000045">
    <property type="protein sequence ID" value="EAL66350.1"/>
    <property type="molecule type" value="Genomic_DNA"/>
</dbReference>
<dbReference type="PIR" id="A31429">
    <property type="entry name" value="A31429"/>
</dbReference>
<dbReference type="RefSeq" id="XP_640342.1">
    <property type="nucleotide sequence ID" value="XM_635250.1"/>
</dbReference>
<dbReference type="PDB" id="1HCD">
    <property type="method" value="NMR"/>
    <property type="chains" value="A=1-118"/>
</dbReference>
<dbReference type="PDB" id="1HCE">
    <property type="method" value="NMR"/>
    <property type="chains" value="A=1-118"/>
</dbReference>
<dbReference type="PDBsum" id="1HCD"/>
<dbReference type="PDBsum" id="1HCE"/>
<dbReference type="SMR" id="P13231"/>
<dbReference type="FunCoup" id="P13231">
    <property type="interactions" value="21"/>
</dbReference>
<dbReference type="iPTMnet" id="P13231"/>
<dbReference type="PaxDb" id="44689-DDB0215335"/>
<dbReference type="EnsemblProtists" id="EAL66350">
    <property type="protein sequence ID" value="EAL66350"/>
    <property type="gene ID" value="DDB_G0282141"/>
</dbReference>
<dbReference type="GeneID" id="8623443"/>
<dbReference type="KEGG" id="ddi:DDB_G0282141"/>
<dbReference type="dictyBase" id="DDB_G0282141">
    <property type="gene designation" value="hatA"/>
</dbReference>
<dbReference type="VEuPathDB" id="AmoebaDB:DDB_G0282141"/>
<dbReference type="eggNOG" id="ENOG502RI2J">
    <property type="taxonomic scope" value="Eukaryota"/>
</dbReference>
<dbReference type="HOGENOM" id="CLU_2077490_0_0_1"/>
<dbReference type="InParanoid" id="P13231"/>
<dbReference type="PhylomeDB" id="P13231"/>
<dbReference type="EvolutionaryTrace" id="P13231"/>
<dbReference type="PRO" id="PR:P13231"/>
<dbReference type="Proteomes" id="UP000002195">
    <property type="component" value="Chromosome 3"/>
</dbReference>
<dbReference type="GO" id="GO:0015629">
    <property type="term" value="C:actin cytoskeleton"/>
    <property type="evidence" value="ECO:0000314"/>
    <property type="project" value="dictyBase"/>
</dbReference>
<dbReference type="GO" id="GO:0030863">
    <property type="term" value="C:cortical cytoskeleton"/>
    <property type="evidence" value="ECO:0000314"/>
    <property type="project" value="dictyBase"/>
</dbReference>
<dbReference type="GO" id="GO:0005829">
    <property type="term" value="C:cytosol"/>
    <property type="evidence" value="ECO:0000314"/>
    <property type="project" value="dictyBase"/>
</dbReference>
<dbReference type="GO" id="GO:0045335">
    <property type="term" value="C:phagocytic vesicle"/>
    <property type="evidence" value="ECO:0007005"/>
    <property type="project" value="dictyBase"/>
</dbReference>
<dbReference type="GO" id="GO:0005886">
    <property type="term" value="C:plasma membrane"/>
    <property type="evidence" value="ECO:0000314"/>
    <property type="project" value="dictyBase"/>
</dbReference>
<dbReference type="GO" id="GO:0051015">
    <property type="term" value="F:actin filament binding"/>
    <property type="evidence" value="ECO:0000314"/>
    <property type="project" value="dictyBase"/>
</dbReference>
<dbReference type="GO" id="GO:0003785">
    <property type="term" value="F:actin monomer binding"/>
    <property type="evidence" value="ECO:0000304"/>
    <property type="project" value="dictyBase"/>
</dbReference>
<dbReference type="GO" id="GO:0005504">
    <property type="term" value="F:fatty acid binding"/>
    <property type="evidence" value="ECO:0000314"/>
    <property type="project" value="dictyBase"/>
</dbReference>
<dbReference type="GO" id="GO:0008289">
    <property type="term" value="F:lipid binding"/>
    <property type="evidence" value="ECO:0000314"/>
    <property type="project" value="dictyBase"/>
</dbReference>
<dbReference type="GO" id="GO:0030674">
    <property type="term" value="F:protein-macromolecule adaptor activity"/>
    <property type="evidence" value="ECO:0007669"/>
    <property type="project" value="InterPro"/>
</dbReference>
<dbReference type="GO" id="GO:0030041">
    <property type="term" value="P:actin filament polymerization"/>
    <property type="evidence" value="ECO:0000314"/>
    <property type="project" value="dictyBase"/>
</dbReference>
<dbReference type="GO" id="GO:0006972">
    <property type="term" value="P:hyperosmotic response"/>
    <property type="evidence" value="ECO:0000315"/>
    <property type="project" value="dictyBase"/>
</dbReference>
<dbReference type="GO" id="GO:0010447">
    <property type="term" value="P:response to acidic pH"/>
    <property type="evidence" value="ECO:0000315"/>
    <property type="project" value="dictyBase"/>
</dbReference>
<dbReference type="CDD" id="cd23341">
    <property type="entry name" value="beta-trefoil_FSCN_HatAB"/>
    <property type="match status" value="1"/>
</dbReference>
<dbReference type="FunFam" id="2.80.10.50:FF:000112">
    <property type="entry name" value="Hisactophilin-1"/>
    <property type="match status" value="1"/>
</dbReference>
<dbReference type="Gene3D" id="2.80.10.50">
    <property type="match status" value="1"/>
</dbReference>
<dbReference type="InterPro" id="IPR008999">
    <property type="entry name" value="Actin-crosslinking"/>
</dbReference>
<dbReference type="InterPro" id="IPR022768">
    <property type="entry name" value="Fascin-like_dom"/>
</dbReference>
<dbReference type="InterPro" id="IPR052883">
    <property type="entry name" value="Hisactophilin"/>
</dbReference>
<dbReference type="PANTHER" id="PTHR33351">
    <property type="entry name" value="HISACTOPHILIN-1-RELATED"/>
    <property type="match status" value="1"/>
</dbReference>
<dbReference type="PANTHER" id="PTHR33351:SF1">
    <property type="entry name" value="IG-LIKE DOMAIN-CONTAINING PROTEIN-RELATED"/>
    <property type="match status" value="1"/>
</dbReference>
<dbReference type="Pfam" id="PF06268">
    <property type="entry name" value="Fascin"/>
    <property type="match status" value="1"/>
</dbReference>
<dbReference type="SUPFAM" id="SSF50405">
    <property type="entry name" value="Actin-crosslinking proteins"/>
    <property type="match status" value="1"/>
</dbReference>
<sequence length="118" mass="13456">MGNRAFKSHHGHFLSAEGEAVKTHHGHHDHHTHFHVENHGGKVALKTHCGKYLSIGDHKQVYLSHHLHGDHSLFHLEHHGGKVSIKGHHHHYISADHHGHVSTKEHHDHDTTFEEIII</sequence>
<comment type="function">
    <text>May act as an intracellular pH sensor that links chemotactic signals to responses in the microfilament system of the cells by nucleating actin polymerization or stabilizing the filaments.</text>
</comment>
<comment type="subunit">
    <text>Homodimer or heterodimer of hatA and hatB, linked by a disulfide bond.</text>
</comment>
<comment type="subcellular location">
    <subcellularLocation>
        <location>Cytoplasm</location>
    </subcellularLocation>
    <subcellularLocation>
        <location>Cell membrane</location>
        <topology>Lipid-anchor</topology>
        <orientation>Cytoplasmic side</orientation>
    </subcellularLocation>
</comment>
<comment type="PTM">
    <text evidence="1">Phosphorylated.</text>
</comment>
<comment type="similarity">
    <text evidence="2">Belongs to the hisactophilin family.</text>
</comment>
<proteinExistence type="evidence at protein level"/>